<feature type="chain" id="PRO_1000092626" description="Ribosomal RNA small subunit methyltransferase G">
    <location>
        <begin position="1"/>
        <end position="207"/>
    </location>
</feature>
<feature type="binding site" evidence="1">
    <location>
        <position position="73"/>
    </location>
    <ligand>
        <name>S-adenosyl-L-methionine</name>
        <dbReference type="ChEBI" id="CHEBI:59789"/>
    </ligand>
</feature>
<feature type="binding site" evidence="1">
    <location>
        <position position="78"/>
    </location>
    <ligand>
        <name>S-adenosyl-L-methionine</name>
        <dbReference type="ChEBI" id="CHEBI:59789"/>
    </ligand>
</feature>
<feature type="binding site" evidence="1">
    <location>
        <begin position="124"/>
        <end position="125"/>
    </location>
    <ligand>
        <name>S-adenosyl-L-methionine</name>
        <dbReference type="ChEBI" id="CHEBI:59789"/>
    </ligand>
</feature>
<feature type="binding site" evidence="1">
    <location>
        <position position="139"/>
    </location>
    <ligand>
        <name>S-adenosyl-L-methionine</name>
        <dbReference type="ChEBI" id="CHEBI:59789"/>
    </ligand>
</feature>
<accession>B5YXE4</accession>
<reference key="1">
    <citation type="journal article" date="2011" name="Proc. Natl. Acad. Sci. U.S.A.">
        <title>Genomic anatomy of Escherichia coli O157:H7 outbreaks.</title>
        <authorList>
            <person name="Eppinger M."/>
            <person name="Mammel M.K."/>
            <person name="Leclerc J.E."/>
            <person name="Ravel J."/>
            <person name="Cebula T.A."/>
        </authorList>
    </citation>
    <scope>NUCLEOTIDE SEQUENCE [LARGE SCALE GENOMIC DNA]</scope>
    <source>
        <strain>EC4115 / EHEC</strain>
    </source>
</reference>
<evidence type="ECO:0000255" key="1">
    <source>
        <dbReference type="HAMAP-Rule" id="MF_00074"/>
    </source>
</evidence>
<keyword id="KW-0963">Cytoplasm</keyword>
<keyword id="KW-0489">Methyltransferase</keyword>
<keyword id="KW-0698">rRNA processing</keyword>
<keyword id="KW-0949">S-adenosyl-L-methionine</keyword>
<keyword id="KW-0808">Transferase</keyword>
<dbReference type="EC" id="2.1.1.170" evidence="1"/>
<dbReference type="EMBL" id="CP001164">
    <property type="protein sequence ID" value="ACI38207.1"/>
    <property type="molecule type" value="Genomic_DNA"/>
</dbReference>
<dbReference type="RefSeq" id="WP_000932839.1">
    <property type="nucleotide sequence ID" value="NC_011353.1"/>
</dbReference>
<dbReference type="SMR" id="B5YXE4"/>
<dbReference type="GeneID" id="93778227"/>
<dbReference type="KEGG" id="ecf:ECH74115_5176"/>
<dbReference type="HOGENOM" id="CLU_065341_2_2_6"/>
<dbReference type="GO" id="GO:0005829">
    <property type="term" value="C:cytosol"/>
    <property type="evidence" value="ECO:0007669"/>
    <property type="project" value="TreeGrafter"/>
</dbReference>
<dbReference type="GO" id="GO:0070043">
    <property type="term" value="F:rRNA (guanine-N7-)-methyltransferase activity"/>
    <property type="evidence" value="ECO:0007669"/>
    <property type="project" value="UniProtKB-UniRule"/>
</dbReference>
<dbReference type="CDD" id="cd02440">
    <property type="entry name" value="AdoMet_MTases"/>
    <property type="match status" value="1"/>
</dbReference>
<dbReference type="FunFam" id="3.40.50.150:FF:000032">
    <property type="entry name" value="Ribosomal RNA small subunit methyltransferase G"/>
    <property type="match status" value="1"/>
</dbReference>
<dbReference type="Gene3D" id="3.40.50.150">
    <property type="entry name" value="Vaccinia Virus protein VP39"/>
    <property type="match status" value="1"/>
</dbReference>
<dbReference type="HAMAP" id="MF_00074">
    <property type="entry name" value="16SrRNA_methyltr_G"/>
    <property type="match status" value="1"/>
</dbReference>
<dbReference type="InterPro" id="IPR003682">
    <property type="entry name" value="rRNA_ssu_MeTfrase_G"/>
</dbReference>
<dbReference type="InterPro" id="IPR029063">
    <property type="entry name" value="SAM-dependent_MTases_sf"/>
</dbReference>
<dbReference type="NCBIfam" id="TIGR00138">
    <property type="entry name" value="rsmG_gidB"/>
    <property type="match status" value="1"/>
</dbReference>
<dbReference type="PANTHER" id="PTHR31760">
    <property type="entry name" value="S-ADENOSYL-L-METHIONINE-DEPENDENT METHYLTRANSFERASES SUPERFAMILY PROTEIN"/>
    <property type="match status" value="1"/>
</dbReference>
<dbReference type="PANTHER" id="PTHR31760:SF0">
    <property type="entry name" value="S-ADENOSYL-L-METHIONINE-DEPENDENT METHYLTRANSFERASES SUPERFAMILY PROTEIN"/>
    <property type="match status" value="1"/>
</dbReference>
<dbReference type="Pfam" id="PF02527">
    <property type="entry name" value="GidB"/>
    <property type="match status" value="1"/>
</dbReference>
<dbReference type="PIRSF" id="PIRSF003078">
    <property type="entry name" value="GidB"/>
    <property type="match status" value="1"/>
</dbReference>
<dbReference type="SUPFAM" id="SSF53335">
    <property type="entry name" value="S-adenosyl-L-methionine-dependent methyltransferases"/>
    <property type="match status" value="1"/>
</dbReference>
<gene>
    <name evidence="1" type="primary">rsmG</name>
    <name type="ordered locus">ECH74115_5176</name>
</gene>
<proteinExistence type="inferred from homology"/>
<organism>
    <name type="scientific">Escherichia coli O157:H7 (strain EC4115 / EHEC)</name>
    <dbReference type="NCBI Taxonomy" id="444450"/>
    <lineage>
        <taxon>Bacteria</taxon>
        <taxon>Pseudomonadati</taxon>
        <taxon>Pseudomonadota</taxon>
        <taxon>Gammaproteobacteria</taxon>
        <taxon>Enterobacterales</taxon>
        <taxon>Enterobacteriaceae</taxon>
        <taxon>Escherichia</taxon>
    </lineage>
</organism>
<sequence>MLNKLSLLLKDAGISLTDHQKNQLIAYVNMLHKWNKAYNLTSVRDPNEMLVRHILDSIVVAPYLQGERFIDVGTGPGLPGIPLSIVRPEAHFTLLDSLGKRVRFLRQVQHELKLENIEPVQSRVEEFPSEPPFDGVISRAFASLNDMVSWCHHLPGEQGRFYALKGQMPEDEIALLPEEYQVESVVKLQVPALDGERHLVVIKANKI</sequence>
<protein>
    <recommendedName>
        <fullName evidence="1">Ribosomal RNA small subunit methyltransferase G</fullName>
        <ecNumber evidence="1">2.1.1.170</ecNumber>
    </recommendedName>
    <alternativeName>
        <fullName evidence="1">16S rRNA 7-methylguanosine methyltransferase</fullName>
        <shortName evidence="1">16S rRNA m7G methyltransferase</shortName>
    </alternativeName>
</protein>
<comment type="function">
    <text evidence="1">Specifically methylates the N7 position of guanine in position 527 of 16S rRNA.</text>
</comment>
<comment type="catalytic activity">
    <reaction evidence="1">
        <text>guanosine(527) in 16S rRNA + S-adenosyl-L-methionine = N(7)-methylguanosine(527) in 16S rRNA + S-adenosyl-L-homocysteine</text>
        <dbReference type="Rhea" id="RHEA:42732"/>
        <dbReference type="Rhea" id="RHEA-COMP:10209"/>
        <dbReference type="Rhea" id="RHEA-COMP:10210"/>
        <dbReference type="ChEBI" id="CHEBI:57856"/>
        <dbReference type="ChEBI" id="CHEBI:59789"/>
        <dbReference type="ChEBI" id="CHEBI:74269"/>
        <dbReference type="ChEBI" id="CHEBI:74480"/>
        <dbReference type="EC" id="2.1.1.170"/>
    </reaction>
</comment>
<comment type="subcellular location">
    <subcellularLocation>
        <location evidence="1">Cytoplasm</location>
    </subcellularLocation>
</comment>
<comment type="similarity">
    <text evidence="1">Belongs to the methyltransferase superfamily. RNA methyltransferase RsmG family.</text>
</comment>
<name>RSMG_ECO5E</name>